<gene>
    <name type="primary">BXL7</name>
    <name type="ordered locus">At1g78060</name>
    <name type="ORF">F28K19.27</name>
    <name type="ORF">F28K19.32</name>
</gene>
<accession>Q9SGZ5</accession>
<accession>Q8VZG5</accession>
<keyword id="KW-0272">Extracellular matrix</keyword>
<keyword id="KW-0325">Glycoprotein</keyword>
<keyword id="KW-0326">Glycosidase</keyword>
<keyword id="KW-0378">Hydrolase</keyword>
<keyword id="KW-1185">Reference proteome</keyword>
<keyword id="KW-0964">Secreted</keyword>
<keyword id="KW-0732">Signal</keyword>
<sequence>MAKQLLLLLLLFIVHGVESAPPPHSCDPSNPTTKLYQFCRTDLPIGKRARDLVSRLTIDEKISQLVNTAPGIPRLGVPAYEWWSEALHGVAYAGPGIRFNGTVKAATSFPQVILTAASFDSYEWFRIAQVIGKEARGVYNAGQANGMTFWAPNINIFRDPRWGRGQETPGEDPMMTGTYAVAYVRGLQGDSFDGRKTLSNHLQASACCKHFTAYDLDRWKGITRYVFNAQVSLADLAETYQPPFKKCIEEGRASGIMCAYNRVNGIPSCADPNLLTRTARGQWAFRGYITSDCDAVSIIYDAQGYAKSPEDAVADVLKAGMDVNCGSYLQKHTKSALQQKKVSETDIDRALLNLFSVRIRLGLFNGDPTKLPYGNISPNEVCSPAHQALALDAARNGIVLLKNNLKLLPFSKRSVSSLAVIGPNAHVVKTLLGNYAGPPCKTVTPLDALRSYVKNAVYHQGCDSVACSNAAIDQAVAIAKNADHVVLIMGLDQTQEKEDFDRVDLSLPGKQQELITSVANAAKKPVVLVLICGGPVDISFAANNNKIGSIIWAGYPGEAGGIAISEIIFGDHNPGGRLPVTWYPQSFVNIQMTDMRMRSATGYPGRTYKFYKGPKVYEFGHGLSYSAYSYRFKTLAETNLYLNQSKAQTNSDSVRYTLVSEMGKEGCDVAKTKVTVEVENQGEMAGKHPVLMFARHERGGEDGKRAEKQLVGFKSIVLSNGEKAEMEFEIGLCEHLSRANEFGVMVLEEGKYFLTVGDSELPLIVNV</sequence>
<dbReference type="EC" id="3.2.1.-"/>
<dbReference type="EMBL" id="AC009243">
    <property type="protein sequence ID" value="AAF17692.1"/>
    <property type="status" value="ALT_SEQ"/>
    <property type="molecule type" value="Genomic_DNA"/>
</dbReference>
<dbReference type="EMBL" id="CP002684">
    <property type="protein sequence ID" value="AEE36063.1"/>
    <property type="molecule type" value="Genomic_DNA"/>
</dbReference>
<dbReference type="EMBL" id="AY064977">
    <property type="protein sequence ID" value="AAL57631.1"/>
    <property type="molecule type" value="mRNA"/>
</dbReference>
<dbReference type="RefSeq" id="NP_177929.1">
    <property type="nucleotide sequence ID" value="NM_106455.3"/>
</dbReference>
<dbReference type="SMR" id="Q9SGZ5"/>
<dbReference type="FunCoup" id="Q9SGZ5">
    <property type="interactions" value="647"/>
</dbReference>
<dbReference type="STRING" id="3702.Q9SGZ5"/>
<dbReference type="CAZy" id="GH3">
    <property type="family name" value="Glycoside Hydrolase Family 3"/>
</dbReference>
<dbReference type="GlyCosmos" id="Q9SGZ5">
    <property type="glycosylation" value="2 sites, No reported glycans"/>
</dbReference>
<dbReference type="GlyGen" id="Q9SGZ5">
    <property type="glycosylation" value="2 sites"/>
</dbReference>
<dbReference type="PaxDb" id="3702-AT1G78060.1"/>
<dbReference type="ProteomicsDB" id="240381"/>
<dbReference type="EnsemblPlants" id="AT1G78060.1">
    <property type="protein sequence ID" value="AT1G78060.1"/>
    <property type="gene ID" value="AT1G78060"/>
</dbReference>
<dbReference type="GeneID" id="844141"/>
<dbReference type="Gramene" id="AT1G78060.1">
    <property type="protein sequence ID" value="AT1G78060.1"/>
    <property type="gene ID" value="AT1G78060"/>
</dbReference>
<dbReference type="KEGG" id="ath:AT1G78060"/>
<dbReference type="Araport" id="AT1G78060"/>
<dbReference type="TAIR" id="AT1G78060"/>
<dbReference type="eggNOG" id="ENOG502QQ55">
    <property type="taxonomic scope" value="Eukaryota"/>
</dbReference>
<dbReference type="HOGENOM" id="CLU_004542_5_3_1"/>
<dbReference type="InParanoid" id="Q9SGZ5"/>
<dbReference type="OMA" id="WTTHAGA"/>
<dbReference type="OrthoDB" id="47059at2759"/>
<dbReference type="PhylomeDB" id="Q9SGZ5"/>
<dbReference type="BioCyc" id="ARA:AT1G78060-MONOMER"/>
<dbReference type="CD-CODE" id="4299E36E">
    <property type="entry name" value="Nucleolus"/>
</dbReference>
<dbReference type="PRO" id="PR:Q9SGZ5"/>
<dbReference type="Proteomes" id="UP000006548">
    <property type="component" value="Chromosome 1"/>
</dbReference>
<dbReference type="ExpressionAtlas" id="Q9SGZ5">
    <property type="expression patterns" value="baseline and differential"/>
</dbReference>
<dbReference type="GO" id="GO:0048046">
    <property type="term" value="C:apoplast"/>
    <property type="evidence" value="ECO:0007005"/>
    <property type="project" value="TAIR"/>
</dbReference>
<dbReference type="GO" id="GO:0009507">
    <property type="term" value="C:chloroplast"/>
    <property type="evidence" value="ECO:0007005"/>
    <property type="project" value="TAIR"/>
</dbReference>
<dbReference type="GO" id="GO:0005739">
    <property type="term" value="C:mitochondrion"/>
    <property type="evidence" value="ECO:0007005"/>
    <property type="project" value="TAIR"/>
</dbReference>
<dbReference type="GO" id="GO:0009505">
    <property type="term" value="C:plant-type cell wall"/>
    <property type="evidence" value="ECO:0007005"/>
    <property type="project" value="TAIR"/>
</dbReference>
<dbReference type="GO" id="GO:0009506">
    <property type="term" value="C:plasmodesma"/>
    <property type="evidence" value="ECO:0007005"/>
    <property type="project" value="TAIR"/>
</dbReference>
<dbReference type="GO" id="GO:0009044">
    <property type="term" value="F:xylan 1,4-beta-xylosidase activity"/>
    <property type="evidence" value="ECO:0007669"/>
    <property type="project" value="InterPro"/>
</dbReference>
<dbReference type="GO" id="GO:0045493">
    <property type="term" value="P:xylan catabolic process"/>
    <property type="evidence" value="ECO:0007669"/>
    <property type="project" value="InterPro"/>
</dbReference>
<dbReference type="FunFam" id="3.40.50.1700:FF:000001">
    <property type="entry name" value="probable beta-D-xylosidase 2"/>
    <property type="match status" value="1"/>
</dbReference>
<dbReference type="FunFam" id="2.60.40.10:FF:002917">
    <property type="entry name" value="Probable beta-D-xylosidase 7"/>
    <property type="match status" value="1"/>
</dbReference>
<dbReference type="FunFam" id="3.20.20.300:FF:000004">
    <property type="entry name" value="probable beta-D-xylosidase 7"/>
    <property type="match status" value="1"/>
</dbReference>
<dbReference type="Gene3D" id="3.40.50.1700">
    <property type="entry name" value="Glycoside hydrolase family 3 C-terminal domain"/>
    <property type="match status" value="1"/>
</dbReference>
<dbReference type="Gene3D" id="3.20.20.300">
    <property type="entry name" value="Glycoside hydrolase, family 3, N-terminal domain"/>
    <property type="match status" value="1"/>
</dbReference>
<dbReference type="Gene3D" id="2.60.40.10">
    <property type="entry name" value="Immunoglobulins"/>
    <property type="match status" value="1"/>
</dbReference>
<dbReference type="InterPro" id="IPR044993">
    <property type="entry name" value="BXL"/>
</dbReference>
<dbReference type="InterPro" id="IPR026891">
    <property type="entry name" value="Fn3-like"/>
</dbReference>
<dbReference type="InterPro" id="IPR002772">
    <property type="entry name" value="Glyco_hydro_3_C"/>
</dbReference>
<dbReference type="InterPro" id="IPR036881">
    <property type="entry name" value="Glyco_hydro_3_C_sf"/>
</dbReference>
<dbReference type="InterPro" id="IPR001764">
    <property type="entry name" value="Glyco_hydro_3_N"/>
</dbReference>
<dbReference type="InterPro" id="IPR036962">
    <property type="entry name" value="Glyco_hydro_3_N_sf"/>
</dbReference>
<dbReference type="InterPro" id="IPR017853">
    <property type="entry name" value="Glycoside_hydrolase_SF"/>
</dbReference>
<dbReference type="InterPro" id="IPR013783">
    <property type="entry name" value="Ig-like_fold"/>
</dbReference>
<dbReference type="PANTHER" id="PTHR42721:SF3">
    <property type="entry name" value="BETA-D-XYLOSIDASE 5-RELATED"/>
    <property type="match status" value="1"/>
</dbReference>
<dbReference type="PANTHER" id="PTHR42721">
    <property type="entry name" value="SUGAR HYDROLASE-RELATED"/>
    <property type="match status" value="1"/>
</dbReference>
<dbReference type="Pfam" id="PF14310">
    <property type="entry name" value="Fn3-like"/>
    <property type="match status" value="1"/>
</dbReference>
<dbReference type="Pfam" id="PF00933">
    <property type="entry name" value="Glyco_hydro_3"/>
    <property type="match status" value="1"/>
</dbReference>
<dbReference type="Pfam" id="PF01915">
    <property type="entry name" value="Glyco_hydro_3_C"/>
    <property type="match status" value="1"/>
</dbReference>
<dbReference type="SMART" id="SM01217">
    <property type="entry name" value="Fn3_like"/>
    <property type="match status" value="1"/>
</dbReference>
<dbReference type="SUPFAM" id="SSF51445">
    <property type="entry name" value="(Trans)glycosidases"/>
    <property type="match status" value="1"/>
</dbReference>
<dbReference type="SUPFAM" id="SSF52279">
    <property type="entry name" value="Beta-D-glucan exohydrolase, C-terminal domain"/>
    <property type="match status" value="1"/>
</dbReference>
<name>BXL7_ARATH</name>
<proteinExistence type="evidence at transcript level"/>
<protein>
    <recommendedName>
        <fullName>Probable beta-D-xylosidase 7</fullName>
        <shortName>AtBXL7</shortName>
        <ecNumber>3.2.1.-</ecNumber>
    </recommendedName>
</protein>
<reference key="1">
    <citation type="journal article" date="2000" name="Nature">
        <title>Sequence and analysis of chromosome 1 of the plant Arabidopsis thaliana.</title>
        <authorList>
            <person name="Theologis A."/>
            <person name="Ecker J.R."/>
            <person name="Palm C.J."/>
            <person name="Federspiel N.A."/>
            <person name="Kaul S."/>
            <person name="White O."/>
            <person name="Alonso J."/>
            <person name="Altafi H."/>
            <person name="Araujo R."/>
            <person name="Bowman C.L."/>
            <person name="Brooks S.Y."/>
            <person name="Buehler E."/>
            <person name="Chan A."/>
            <person name="Chao Q."/>
            <person name="Chen H."/>
            <person name="Cheuk R.F."/>
            <person name="Chin C.W."/>
            <person name="Chung M.K."/>
            <person name="Conn L."/>
            <person name="Conway A.B."/>
            <person name="Conway A.R."/>
            <person name="Creasy T.H."/>
            <person name="Dewar K."/>
            <person name="Dunn P."/>
            <person name="Etgu P."/>
            <person name="Feldblyum T.V."/>
            <person name="Feng J.-D."/>
            <person name="Fong B."/>
            <person name="Fujii C.Y."/>
            <person name="Gill J.E."/>
            <person name="Goldsmith A.D."/>
            <person name="Haas B."/>
            <person name="Hansen N.F."/>
            <person name="Hughes B."/>
            <person name="Huizar L."/>
            <person name="Hunter J.L."/>
            <person name="Jenkins J."/>
            <person name="Johnson-Hopson C."/>
            <person name="Khan S."/>
            <person name="Khaykin E."/>
            <person name="Kim C.J."/>
            <person name="Koo H.L."/>
            <person name="Kremenetskaia I."/>
            <person name="Kurtz D.B."/>
            <person name="Kwan A."/>
            <person name="Lam B."/>
            <person name="Langin-Hooper S."/>
            <person name="Lee A."/>
            <person name="Lee J.M."/>
            <person name="Lenz C.A."/>
            <person name="Li J.H."/>
            <person name="Li Y.-P."/>
            <person name="Lin X."/>
            <person name="Liu S.X."/>
            <person name="Liu Z.A."/>
            <person name="Luros J.S."/>
            <person name="Maiti R."/>
            <person name="Marziali A."/>
            <person name="Militscher J."/>
            <person name="Miranda M."/>
            <person name="Nguyen M."/>
            <person name="Nierman W.C."/>
            <person name="Osborne B.I."/>
            <person name="Pai G."/>
            <person name="Peterson J."/>
            <person name="Pham P.K."/>
            <person name="Rizzo M."/>
            <person name="Rooney T."/>
            <person name="Rowley D."/>
            <person name="Sakano H."/>
            <person name="Salzberg S.L."/>
            <person name="Schwartz J.R."/>
            <person name="Shinn P."/>
            <person name="Southwick A.M."/>
            <person name="Sun H."/>
            <person name="Tallon L.J."/>
            <person name="Tambunga G."/>
            <person name="Toriumi M.J."/>
            <person name="Town C.D."/>
            <person name="Utterback T."/>
            <person name="Van Aken S."/>
            <person name="Vaysberg M."/>
            <person name="Vysotskaia V.S."/>
            <person name="Walker M."/>
            <person name="Wu D."/>
            <person name="Yu G."/>
            <person name="Fraser C.M."/>
            <person name="Venter J.C."/>
            <person name="Davis R.W."/>
        </authorList>
    </citation>
    <scope>NUCLEOTIDE SEQUENCE [LARGE SCALE GENOMIC DNA]</scope>
    <source>
        <strain>cv. Columbia</strain>
    </source>
</reference>
<reference key="2">
    <citation type="journal article" date="2017" name="Plant J.">
        <title>Araport11: a complete reannotation of the Arabidopsis thaliana reference genome.</title>
        <authorList>
            <person name="Cheng C.Y."/>
            <person name="Krishnakumar V."/>
            <person name="Chan A.P."/>
            <person name="Thibaud-Nissen F."/>
            <person name="Schobel S."/>
            <person name="Town C.D."/>
        </authorList>
    </citation>
    <scope>GENOME REANNOTATION</scope>
    <source>
        <strain>cv. Columbia</strain>
    </source>
</reference>
<reference key="3">
    <citation type="journal article" date="2003" name="Science">
        <title>Empirical analysis of transcriptional activity in the Arabidopsis genome.</title>
        <authorList>
            <person name="Yamada K."/>
            <person name="Lim J."/>
            <person name="Dale J.M."/>
            <person name="Chen H."/>
            <person name="Shinn P."/>
            <person name="Palm C.J."/>
            <person name="Southwick A.M."/>
            <person name="Wu H.C."/>
            <person name="Kim C.J."/>
            <person name="Nguyen M."/>
            <person name="Pham P.K."/>
            <person name="Cheuk R.F."/>
            <person name="Karlin-Newmann G."/>
            <person name="Liu S.X."/>
            <person name="Lam B."/>
            <person name="Sakano H."/>
            <person name="Wu T."/>
            <person name="Yu G."/>
            <person name="Miranda M."/>
            <person name="Quach H.L."/>
            <person name="Tripp M."/>
            <person name="Chang C.H."/>
            <person name="Lee J.M."/>
            <person name="Toriumi M.J."/>
            <person name="Chan M.M."/>
            <person name="Tang C.C."/>
            <person name="Onodera C.S."/>
            <person name="Deng J.M."/>
            <person name="Akiyama K."/>
            <person name="Ansari Y."/>
            <person name="Arakawa T."/>
            <person name="Banh J."/>
            <person name="Banno F."/>
            <person name="Bowser L."/>
            <person name="Brooks S.Y."/>
            <person name="Carninci P."/>
            <person name="Chao Q."/>
            <person name="Choy N."/>
            <person name="Enju A."/>
            <person name="Goldsmith A.D."/>
            <person name="Gurjal M."/>
            <person name="Hansen N.F."/>
            <person name="Hayashizaki Y."/>
            <person name="Johnson-Hopson C."/>
            <person name="Hsuan V.W."/>
            <person name="Iida K."/>
            <person name="Karnes M."/>
            <person name="Khan S."/>
            <person name="Koesema E."/>
            <person name="Ishida J."/>
            <person name="Jiang P.X."/>
            <person name="Jones T."/>
            <person name="Kawai J."/>
            <person name="Kamiya A."/>
            <person name="Meyers C."/>
            <person name="Nakajima M."/>
            <person name="Narusaka M."/>
            <person name="Seki M."/>
            <person name="Sakurai T."/>
            <person name="Satou M."/>
            <person name="Tamse R."/>
            <person name="Vaysberg M."/>
            <person name="Wallender E.K."/>
            <person name="Wong C."/>
            <person name="Yamamura Y."/>
            <person name="Yuan S."/>
            <person name="Shinozaki K."/>
            <person name="Davis R.W."/>
            <person name="Theologis A."/>
            <person name="Ecker J.R."/>
        </authorList>
    </citation>
    <scope>NUCLEOTIDE SEQUENCE [LARGE SCALE MRNA]</scope>
    <source>
        <strain>cv. Columbia</strain>
    </source>
</reference>
<reference key="4">
    <citation type="journal article" date="2003" name="Plant J.">
        <title>AtBXL1, a novel higher plant (Arabidopsis thaliana) putative beta-xylosidase gene, is involved in secondary cell wall metabolism and plant development.</title>
        <authorList>
            <person name="Goujon T."/>
            <person name="Minic Z."/>
            <person name="El Amrani A."/>
            <person name="Lerouxel O."/>
            <person name="Aletti E."/>
            <person name="Lapierre C."/>
            <person name="Joseleau J.-P."/>
            <person name="Jouanin L."/>
        </authorList>
    </citation>
    <scope>IDENTIFICATION</scope>
</reference>
<organism>
    <name type="scientific">Arabidopsis thaliana</name>
    <name type="common">Mouse-ear cress</name>
    <dbReference type="NCBI Taxonomy" id="3702"/>
    <lineage>
        <taxon>Eukaryota</taxon>
        <taxon>Viridiplantae</taxon>
        <taxon>Streptophyta</taxon>
        <taxon>Embryophyta</taxon>
        <taxon>Tracheophyta</taxon>
        <taxon>Spermatophyta</taxon>
        <taxon>Magnoliopsida</taxon>
        <taxon>eudicotyledons</taxon>
        <taxon>Gunneridae</taxon>
        <taxon>Pentapetalae</taxon>
        <taxon>rosids</taxon>
        <taxon>malvids</taxon>
        <taxon>Brassicales</taxon>
        <taxon>Brassicaceae</taxon>
        <taxon>Camelineae</taxon>
        <taxon>Arabidopsis</taxon>
    </lineage>
</organism>
<comment type="subcellular location">
    <subcellularLocation>
        <location evidence="1">Secreted</location>
        <location evidence="1">Extracellular space</location>
        <location evidence="1">Extracellular matrix</location>
    </subcellularLocation>
</comment>
<comment type="similarity">
    <text evidence="3">Belongs to the glycosyl hydrolase 3 family.</text>
</comment>
<comment type="sequence caution" evidence="3">
    <conflict type="erroneous gene model prediction">
        <sequence resource="EMBL-CDS" id="AAF17692"/>
    </conflict>
</comment>
<feature type="signal peptide" evidence="2">
    <location>
        <begin position="1"/>
        <end position="19"/>
    </location>
</feature>
<feature type="chain" id="PRO_0000384062" description="Probable beta-D-xylosidase 7">
    <location>
        <begin position="20"/>
        <end position="767"/>
    </location>
</feature>
<feature type="active site" evidence="1">
    <location>
        <position position="292"/>
    </location>
</feature>
<feature type="glycosylation site" description="N-linked (GlcNAc...) asparagine" evidence="2">
    <location>
        <position position="100"/>
    </location>
</feature>
<feature type="glycosylation site" description="N-linked (GlcNAc...) asparagine" evidence="2">
    <location>
        <position position="643"/>
    </location>
</feature>
<evidence type="ECO:0000250" key="1"/>
<evidence type="ECO:0000255" key="2"/>
<evidence type="ECO:0000305" key="3"/>